<sequence length="210" mass="22702">MKKEIASHLLEIGAVFLQPNDPFTWSSGMKSPIYCDNRLTLSYPKVRQAIAAGLEELIKEHFPTVEVIAGTATAGIAHAAWVSDRMDLPMCYVRSKAKGHGKGNQIEGKAEKGQKVVVVEDLISTGGSAITCVEALREAGCEVLGIVSIFTYELEAGKEKLEAANVASYSLSDYSALTEVAAEKGMIGQAETKKLQEWRKDPANEAWITA</sequence>
<protein>
    <recommendedName>
        <fullName evidence="1">Orotate phosphoribosyltransferase</fullName>
        <shortName evidence="1">OPRT</shortName>
        <shortName evidence="1">OPRTase</shortName>
        <ecNumber evidence="1">2.4.2.10</ecNumber>
    </recommendedName>
</protein>
<gene>
    <name evidence="1" type="primary">pyrE</name>
    <name type="ordered locus">BCE_3927</name>
</gene>
<accession>Q732I7</accession>
<reference key="1">
    <citation type="journal article" date="2004" name="Nucleic Acids Res.">
        <title>The genome sequence of Bacillus cereus ATCC 10987 reveals metabolic adaptations and a large plasmid related to Bacillus anthracis pXO1.</title>
        <authorList>
            <person name="Rasko D.A."/>
            <person name="Ravel J."/>
            <person name="Oekstad O.A."/>
            <person name="Helgason E."/>
            <person name="Cer R.Z."/>
            <person name="Jiang L."/>
            <person name="Shores K.A."/>
            <person name="Fouts D.E."/>
            <person name="Tourasse N.J."/>
            <person name="Angiuoli S.V."/>
            <person name="Kolonay J.F."/>
            <person name="Nelson W.C."/>
            <person name="Kolstoe A.-B."/>
            <person name="Fraser C.M."/>
            <person name="Read T.D."/>
        </authorList>
    </citation>
    <scope>NUCLEOTIDE SEQUENCE [LARGE SCALE GENOMIC DNA]</scope>
    <source>
        <strain>ATCC 10987 / NRS 248</strain>
    </source>
</reference>
<evidence type="ECO:0000255" key="1">
    <source>
        <dbReference type="HAMAP-Rule" id="MF_01208"/>
    </source>
</evidence>
<organism>
    <name type="scientific">Bacillus cereus (strain ATCC 10987 / NRS 248)</name>
    <dbReference type="NCBI Taxonomy" id="222523"/>
    <lineage>
        <taxon>Bacteria</taxon>
        <taxon>Bacillati</taxon>
        <taxon>Bacillota</taxon>
        <taxon>Bacilli</taxon>
        <taxon>Bacillales</taxon>
        <taxon>Bacillaceae</taxon>
        <taxon>Bacillus</taxon>
        <taxon>Bacillus cereus group</taxon>
    </lineage>
</organism>
<proteinExistence type="inferred from homology"/>
<comment type="function">
    <text evidence="1">Catalyzes the transfer of a ribosyl phosphate group from 5-phosphoribose 1-diphosphate to orotate, leading to the formation of orotidine monophosphate (OMP).</text>
</comment>
<comment type="catalytic activity">
    <reaction evidence="1">
        <text>orotidine 5'-phosphate + diphosphate = orotate + 5-phospho-alpha-D-ribose 1-diphosphate</text>
        <dbReference type="Rhea" id="RHEA:10380"/>
        <dbReference type="ChEBI" id="CHEBI:30839"/>
        <dbReference type="ChEBI" id="CHEBI:33019"/>
        <dbReference type="ChEBI" id="CHEBI:57538"/>
        <dbReference type="ChEBI" id="CHEBI:58017"/>
        <dbReference type="EC" id="2.4.2.10"/>
    </reaction>
</comment>
<comment type="cofactor">
    <cofactor evidence="1">
        <name>Mg(2+)</name>
        <dbReference type="ChEBI" id="CHEBI:18420"/>
    </cofactor>
</comment>
<comment type="pathway">
    <text evidence="1">Pyrimidine metabolism; UMP biosynthesis via de novo pathway; UMP from orotate: step 1/2.</text>
</comment>
<comment type="subunit">
    <text evidence="1">Homodimer.</text>
</comment>
<comment type="similarity">
    <text evidence="1">Belongs to the purine/pyrimidine phosphoribosyltransferase family. PyrE subfamily.</text>
</comment>
<name>PYRE_BACC1</name>
<feature type="chain" id="PRO_0000110667" description="Orotate phosphoribosyltransferase">
    <location>
        <begin position="1"/>
        <end position="210"/>
    </location>
</feature>
<feature type="binding site" evidence="1">
    <location>
        <position position="94"/>
    </location>
    <ligand>
        <name>5-phospho-alpha-D-ribose 1-diphosphate</name>
        <dbReference type="ChEBI" id="CHEBI:58017"/>
        <note>ligand shared between dimeric partners</note>
    </ligand>
</feature>
<feature type="binding site" evidence="1">
    <location>
        <position position="98"/>
    </location>
    <ligand>
        <name>5-phospho-alpha-D-ribose 1-diphosphate</name>
        <dbReference type="ChEBI" id="CHEBI:58017"/>
        <note>ligand shared between dimeric partners</note>
    </ligand>
</feature>
<feature type="binding site" evidence="1">
    <location>
        <position position="100"/>
    </location>
    <ligand>
        <name>5-phospho-alpha-D-ribose 1-diphosphate</name>
        <dbReference type="ChEBI" id="CHEBI:58017"/>
        <note>ligand shared between dimeric partners</note>
    </ligand>
</feature>
<feature type="binding site" description="in other chain" evidence="1">
    <location>
        <begin position="120"/>
        <end position="128"/>
    </location>
    <ligand>
        <name>5-phospho-alpha-D-ribose 1-diphosphate</name>
        <dbReference type="ChEBI" id="CHEBI:58017"/>
        <note>ligand shared between dimeric partners</note>
    </ligand>
</feature>
<feature type="binding site" evidence="1">
    <location>
        <position position="124"/>
    </location>
    <ligand>
        <name>orotate</name>
        <dbReference type="ChEBI" id="CHEBI:30839"/>
    </ligand>
</feature>
<dbReference type="EC" id="2.4.2.10" evidence="1"/>
<dbReference type="EMBL" id="AE017194">
    <property type="protein sequence ID" value="AAS42830.1"/>
    <property type="molecule type" value="Genomic_DNA"/>
</dbReference>
<dbReference type="SMR" id="Q732I7"/>
<dbReference type="KEGG" id="bca:BCE_3927"/>
<dbReference type="HOGENOM" id="CLU_074878_1_1_9"/>
<dbReference type="UniPathway" id="UPA00070">
    <property type="reaction ID" value="UER00119"/>
</dbReference>
<dbReference type="Proteomes" id="UP000002527">
    <property type="component" value="Chromosome"/>
</dbReference>
<dbReference type="GO" id="GO:0000287">
    <property type="term" value="F:magnesium ion binding"/>
    <property type="evidence" value="ECO:0007669"/>
    <property type="project" value="UniProtKB-UniRule"/>
</dbReference>
<dbReference type="GO" id="GO:0004588">
    <property type="term" value="F:orotate phosphoribosyltransferase activity"/>
    <property type="evidence" value="ECO:0007669"/>
    <property type="project" value="UniProtKB-UniRule"/>
</dbReference>
<dbReference type="GO" id="GO:0044205">
    <property type="term" value="P:'de novo' UMP biosynthetic process"/>
    <property type="evidence" value="ECO:0007669"/>
    <property type="project" value="UniProtKB-UniRule"/>
</dbReference>
<dbReference type="GO" id="GO:0019856">
    <property type="term" value="P:pyrimidine nucleobase biosynthetic process"/>
    <property type="evidence" value="ECO:0007669"/>
    <property type="project" value="TreeGrafter"/>
</dbReference>
<dbReference type="CDD" id="cd06223">
    <property type="entry name" value="PRTases_typeI"/>
    <property type="match status" value="1"/>
</dbReference>
<dbReference type="Gene3D" id="3.40.50.2020">
    <property type="match status" value="1"/>
</dbReference>
<dbReference type="HAMAP" id="MF_01208">
    <property type="entry name" value="PyrE"/>
    <property type="match status" value="1"/>
</dbReference>
<dbReference type="InterPro" id="IPR023031">
    <property type="entry name" value="OPRT"/>
</dbReference>
<dbReference type="InterPro" id="IPR004467">
    <property type="entry name" value="Or_phspho_trans_dom"/>
</dbReference>
<dbReference type="InterPro" id="IPR000836">
    <property type="entry name" value="PRibTrfase_dom"/>
</dbReference>
<dbReference type="InterPro" id="IPR029057">
    <property type="entry name" value="PRTase-like"/>
</dbReference>
<dbReference type="NCBIfam" id="TIGR00336">
    <property type="entry name" value="pyrE"/>
    <property type="match status" value="1"/>
</dbReference>
<dbReference type="PANTHER" id="PTHR19278">
    <property type="entry name" value="OROTATE PHOSPHORIBOSYLTRANSFERASE"/>
    <property type="match status" value="1"/>
</dbReference>
<dbReference type="PANTHER" id="PTHR19278:SF9">
    <property type="entry name" value="URIDINE 5'-MONOPHOSPHATE SYNTHASE"/>
    <property type="match status" value="1"/>
</dbReference>
<dbReference type="Pfam" id="PF00156">
    <property type="entry name" value="Pribosyltran"/>
    <property type="match status" value="1"/>
</dbReference>
<dbReference type="SUPFAM" id="SSF53271">
    <property type="entry name" value="PRTase-like"/>
    <property type="match status" value="1"/>
</dbReference>
<dbReference type="PROSITE" id="PS00103">
    <property type="entry name" value="PUR_PYR_PR_TRANSFER"/>
    <property type="match status" value="1"/>
</dbReference>
<keyword id="KW-0328">Glycosyltransferase</keyword>
<keyword id="KW-0460">Magnesium</keyword>
<keyword id="KW-0665">Pyrimidine biosynthesis</keyword>
<keyword id="KW-0808">Transferase</keyword>